<gene>
    <name type="ORF">CPC735_002850</name>
</gene>
<name>MAP2_COCP7</name>
<dbReference type="EC" id="3.4.11.18" evidence="1"/>
<dbReference type="EMBL" id="ACFW01000030">
    <property type="protein sequence ID" value="EER26116.1"/>
    <property type="status" value="ALT_INIT"/>
    <property type="molecule type" value="Genomic_DNA"/>
</dbReference>
<dbReference type="RefSeq" id="XP_003068261.1">
    <property type="nucleotide sequence ID" value="XM_003068215.1"/>
</dbReference>
<dbReference type="SMR" id="C5P8Q4"/>
<dbReference type="KEGG" id="cpw:9693744"/>
<dbReference type="HOGENOM" id="CLU_015857_7_1_1"/>
<dbReference type="OrthoDB" id="7848262at2759"/>
<dbReference type="Proteomes" id="UP000009084">
    <property type="component" value="Unassembled WGS sequence"/>
</dbReference>
<dbReference type="GO" id="GO:0005737">
    <property type="term" value="C:cytoplasm"/>
    <property type="evidence" value="ECO:0007669"/>
    <property type="project" value="UniProtKB-SubCell"/>
</dbReference>
<dbReference type="GO" id="GO:0004239">
    <property type="term" value="F:initiator methionyl aminopeptidase activity"/>
    <property type="evidence" value="ECO:0007669"/>
    <property type="project" value="UniProtKB-UniRule"/>
</dbReference>
<dbReference type="GO" id="GO:0046872">
    <property type="term" value="F:metal ion binding"/>
    <property type="evidence" value="ECO:0007669"/>
    <property type="project" value="UniProtKB-UniRule"/>
</dbReference>
<dbReference type="GO" id="GO:0070006">
    <property type="term" value="F:metalloaminopeptidase activity"/>
    <property type="evidence" value="ECO:0007669"/>
    <property type="project" value="UniProtKB-UniRule"/>
</dbReference>
<dbReference type="GO" id="GO:0006508">
    <property type="term" value="P:proteolysis"/>
    <property type="evidence" value="ECO:0007669"/>
    <property type="project" value="UniProtKB-KW"/>
</dbReference>
<dbReference type="CDD" id="cd01088">
    <property type="entry name" value="MetAP2"/>
    <property type="match status" value="1"/>
</dbReference>
<dbReference type="Gene3D" id="3.90.230.10">
    <property type="entry name" value="Creatinase/methionine aminopeptidase superfamily"/>
    <property type="match status" value="1"/>
</dbReference>
<dbReference type="Gene3D" id="1.10.10.10">
    <property type="entry name" value="Winged helix-like DNA-binding domain superfamily/Winged helix DNA-binding domain"/>
    <property type="match status" value="1"/>
</dbReference>
<dbReference type="HAMAP" id="MF_03175">
    <property type="entry name" value="MetAP_2_euk"/>
    <property type="match status" value="1"/>
</dbReference>
<dbReference type="InterPro" id="IPR036005">
    <property type="entry name" value="Creatinase/aminopeptidase-like"/>
</dbReference>
<dbReference type="InterPro" id="IPR050247">
    <property type="entry name" value="Met_Aminopeptidase_Type2"/>
</dbReference>
<dbReference type="InterPro" id="IPR000994">
    <property type="entry name" value="Pept_M24"/>
</dbReference>
<dbReference type="InterPro" id="IPR001714">
    <property type="entry name" value="Pept_M24_MAP"/>
</dbReference>
<dbReference type="InterPro" id="IPR002468">
    <property type="entry name" value="Pept_M24A_MAP2"/>
</dbReference>
<dbReference type="InterPro" id="IPR018349">
    <property type="entry name" value="Pept_M24A_MAP2_BS"/>
</dbReference>
<dbReference type="InterPro" id="IPR036388">
    <property type="entry name" value="WH-like_DNA-bd_sf"/>
</dbReference>
<dbReference type="InterPro" id="IPR036390">
    <property type="entry name" value="WH_DNA-bd_sf"/>
</dbReference>
<dbReference type="NCBIfam" id="TIGR00501">
    <property type="entry name" value="met_pdase_II"/>
    <property type="match status" value="1"/>
</dbReference>
<dbReference type="PANTHER" id="PTHR45777">
    <property type="entry name" value="METHIONINE AMINOPEPTIDASE 2"/>
    <property type="match status" value="1"/>
</dbReference>
<dbReference type="PANTHER" id="PTHR45777:SF2">
    <property type="entry name" value="METHIONINE AMINOPEPTIDASE 2"/>
    <property type="match status" value="1"/>
</dbReference>
<dbReference type="Pfam" id="PF00557">
    <property type="entry name" value="Peptidase_M24"/>
    <property type="match status" value="1"/>
</dbReference>
<dbReference type="PRINTS" id="PR00599">
    <property type="entry name" value="MAPEPTIDASE"/>
</dbReference>
<dbReference type="SUPFAM" id="SSF55920">
    <property type="entry name" value="Creatinase/aminopeptidase"/>
    <property type="match status" value="1"/>
</dbReference>
<dbReference type="SUPFAM" id="SSF46785">
    <property type="entry name" value="Winged helix' DNA-binding domain"/>
    <property type="match status" value="1"/>
</dbReference>
<dbReference type="PROSITE" id="PS01202">
    <property type="entry name" value="MAP_2"/>
    <property type="match status" value="1"/>
</dbReference>
<accession>C5P8Q4</accession>
<evidence type="ECO:0000255" key="1">
    <source>
        <dbReference type="HAMAP-Rule" id="MF_03175"/>
    </source>
</evidence>
<evidence type="ECO:0000256" key="2">
    <source>
        <dbReference type="SAM" id="MobiDB-lite"/>
    </source>
</evidence>
<evidence type="ECO:0000305" key="3"/>
<sequence>MAVQALPEINKLSVSEEGAANAAAKGQAAQGTAGNDDAENDESDEDKEDEQEVADGAAAAGGKKKKKKTKKKKKKGTAKVQSDPPRVPLSTLFPNNNYPEGEIVEYKDDNAYRTTNEEKRYLDRMNNDFLTDYRKSAEIHRQVRQYAQKELLKPGRSLTEIAEGIEDSVRALTGHMGLEEGDSLVAGMGFPTGLNINHCAAHYSPNAGNKMVLQYGDVMKVDFGVHVNGRIVDSAFTVAFDPVYDNLLNAVKDATNTGIREAGIDVRMSDIGAAIQETMESYEVEINGTIYPVKAIRNLNGHTIGHYLIHGGSTGKSVPIVKGGDQTKMEEGETYAIETFGSTGKGFVRDDMEVSHYAKVPDAPNVPLRLSSAKNLLNVITKNFGTLPFCRRYLDRLGQEKYLLGLNNLVSSGLVDAYPPLVDVKGSYTAQFEHTILLRPNVKEVITRGDDY</sequence>
<feature type="chain" id="PRO_0000407650" description="Methionine aminopeptidase 2">
    <location>
        <begin position="1"/>
        <end position="452"/>
    </location>
</feature>
<feature type="region of interest" description="Disordered" evidence="2">
    <location>
        <begin position="1"/>
        <end position="96"/>
    </location>
</feature>
<feature type="compositionally biased region" description="Low complexity" evidence="2">
    <location>
        <begin position="18"/>
        <end position="35"/>
    </location>
</feature>
<feature type="compositionally biased region" description="Acidic residues" evidence="2">
    <location>
        <begin position="36"/>
        <end position="53"/>
    </location>
</feature>
<feature type="compositionally biased region" description="Basic residues" evidence="2">
    <location>
        <begin position="62"/>
        <end position="77"/>
    </location>
</feature>
<feature type="binding site" evidence="1">
    <location>
        <position position="202"/>
    </location>
    <ligand>
        <name>substrate</name>
    </ligand>
</feature>
<feature type="binding site" evidence="1">
    <location>
        <position position="222"/>
    </location>
    <ligand>
        <name>a divalent metal cation</name>
        <dbReference type="ChEBI" id="CHEBI:60240"/>
        <label>1</label>
    </ligand>
</feature>
<feature type="binding site" evidence="1">
    <location>
        <position position="233"/>
    </location>
    <ligand>
        <name>a divalent metal cation</name>
        <dbReference type="ChEBI" id="CHEBI:60240"/>
        <label>1</label>
    </ligand>
</feature>
<feature type="binding site" evidence="1">
    <location>
        <position position="233"/>
    </location>
    <ligand>
        <name>a divalent metal cation</name>
        <dbReference type="ChEBI" id="CHEBI:60240"/>
        <label>2</label>
        <note>catalytic</note>
    </ligand>
</feature>
<feature type="binding site" evidence="1">
    <location>
        <position position="302"/>
    </location>
    <ligand>
        <name>a divalent metal cation</name>
        <dbReference type="ChEBI" id="CHEBI:60240"/>
        <label>2</label>
        <note>catalytic</note>
    </ligand>
</feature>
<feature type="binding site" evidence="1">
    <location>
        <position position="310"/>
    </location>
    <ligand>
        <name>substrate</name>
    </ligand>
</feature>
<feature type="binding site" evidence="1">
    <location>
        <position position="338"/>
    </location>
    <ligand>
        <name>a divalent metal cation</name>
        <dbReference type="ChEBI" id="CHEBI:60240"/>
        <label>2</label>
        <note>catalytic</note>
    </ligand>
</feature>
<feature type="binding site" evidence="1">
    <location>
        <position position="433"/>
    </location>
    <ligand>
        <name>a divalent metal cation</name>
        <dbReference type="ChEBI" id="CHEBI:60240"/>
        <label>1</label>
    </ligand>
</feature>
<feature type="binding site" evidence="1">
    <location>
        <position position="433"/>
    </location>
    <ligand>
        <name>a divalent metal cation</name>
        <dbReference type="ChEBI" id="CHEBI:60240"/>
        <label>2</label>
        <note>catalytic</note>
    </ligand>
</feature>
<protein>
    <recommendedName>
        <fullName evidence="1">Methionine aminopeptidase 2</fullName>
        <shortName evidence="1">MAP 2</shortName>
        <shortName evidence="1">MetAP 2</shortName>
        <ecNumber evidence="1">3.4.11.18</ecNumber>
    </recommendedName>
    <alternativeName>
        <fullName evidence="1">Peptidase M</fullName>
    </alternativeName>
</protein>
<proteinExistence type="inferred from homology"/>
<comment type="function">
    <text evidence="1">Cotranslationally removes the N-terminal methionine from nascent proteins. The N-terminal methionine is often cleaved when the second residue in the primary sequence is small and uncharged (Met-Ala-, Cys, Gly, Pro, Ser, Thr, or Val).</text>
</comment>
<comment type="catalytic activity">
    <reaction evidence="1">
        <text>Release of N-terminal amino acids, preferentially methionine, from peptides and arylamides.</text>
        <dbReference type="EC" id="3.4.11.18"/>
    </reaction>
</comment>
<comment type="cofactor">
    <cofactor evidence="1">
        <name>Co(2+)</name>
        <dbReference type="ChEBI" id="CHEBI:48828"/>
    </cofactor>
    <cofactor evidence="1">
        <name>Zn(2+)</name>
        <dbReference type="ChEBI" id="CHEBI:29105"/>
    </cofactor>
    <cofactor evidence="1">
        <name>Mn(2+)</name>
        <dbReference type="ChEBI" id="CHEBI:29035"/>
    </cofactor>
    <cofactor evidence="1">
        <name>Fe(2+)</name>
        <dbReference type="ChEBI" id="CHEBI:29033"/>
    </cofactor>
    <text evidence="1">Binds 2 divalent metal cations per subunit. Has a high-affinity and a low affinity metal-binding site. The true nature of the physiological cofactor is under debate. The enzyme is active with cobalt, zinc, manganese or divalent iron ions. Most likely, methionine aminopeptidases function as mononuclear Fe(2+)-metalloproteases under physiological conditions, and the catalytically relevant metal-binding site has been assigned to the histidine-containing high-affinity site.</text>
</comment>
<comment type="subcellular location">
    <subcellularLocation>
        <location evidence="1">Cytoplasm</location>
    </subcellularLocation>
</comment>
<comment type="similarity">
    <text evidence="1">Belongs to the peptidase M24A family. Methionine aminopeptidase eukaryotic type 2 subfamily.</text>
</comment>
<comment type="sequence caution" evidence="3">
    <conflict type="erroneous initiation">
        <sequence resource="EMBL-CDS" id="EER26116"/>
    </conflict>
    <text>Extended N-terminus.</text>
</comment>
<organism>
    <name type="scientific">Coccidioides posadasii (strain C735)</name>
    <name type="common">Valley fever fungus</name>
    <dbReference type="NCBI Taxonomy" id="222929"/>
    <lineage>
        <taxon>Eukaryota</taxon>
        <taxon>Fungi</taxon>
        <taxon>Dikarya</taxon>
        <taxon>Ascomycota</taxon>
        <taxon>Pezizomycotina</taxon>
        <taxon>Eurotiomycetes</taxon>
        <taxon>Eurotiomycetidae</taxon>
        <taxon>Onygenales</taxon>
        <taxon>Onygenaceae</taxon>
        <taxon>Coccidioides</taxon>
    </lineage>
</organism>
<keyword id="KW-0031">Aminopeptidase</keyword>
<keyword id="KW-0963">Cytoplasm</keyword>
<keyword id="KW-0378">Hydrolase</keyword>
<keyword id="KW-0479">Metal-binding</keyword>
<keyword id="KW-0645">Protease</keyword>
<reference key="1">
    <citation type="journal article" date="2009" name="Genome Res.">
        <title>Comparative genomic analyses of the human fungal pathogens Coccidioides and their relatives.</title>
        <authorList>
            <person name="Sharpton T.J."/>
            <person name="Stajich J.E."/>
            <person name="Rounsley S.D."/>
            <person name="Gardner M.J."/>
            <person name="Wortman J.R."/>
            <person name="Jordar V.S."/>
            <person name="Maiti R."/>
            <person name="Kodira C.D."/>
            <person name="Neafsey D.E."/>
            <person name="Zeng Q."/>
            <person name="Hung C.-Y."/>
            <person name="McMahan C."/>
            <person name="Muszewska A."/>
            <person name="Grynberg M."/>
            <person name="Mandel M.A."/>
            <person name="Kellner E.M."/>
            <person name="Barker B.M."/>
            <person name="Galgiani J.N."/>
            <person name="Orbach M.J."/>
            <person name="Kirkland T.N."/>
            <person name="Cole G.T."/>
            <person name="Henn M.R."/>
            <person name="Birren B.W."/>
            <person name="Taylor J.W."/>
        </authorList>
    </citation>
    <scope>NUCLEOTIDE SEQUENCE [LARGE SCALE GENOMIC DNA]</scope>
    <source>
        <strain>C735</strain>
    </source>
</reference>